<keyword id="KW-0687">Ribonucleoprotein</keyword>
<keyword id="KW-0689">Ribosomal protein</keyword>
<keyword id="KW-0694">RNA-binding</keyword>
<keyword id="KW-0699">rRNA-binding</keyword>
<proteinExistence type="inferred from homology"/>
<evidence type="ECO:0000255" key="1">
    <source>
        <dbReference type="HAMAP-Rule" id="MF_01337"/>
    </source>
</evidence>
<evidence type="ECO:0000305" key="2"/>
<name>RL18_CLOBK</name>
<protein>
    <recommendedName>
        <fullName evidence="1">Large ribosomal subunit protein uL18</fullName>
    </recommendedName>
    <alternativeName>
        <fullName evidence="2">50S ribosomal protein L18</fullName>
    </alternativeName>
</protein>
<dbReference type="EMBL" id="CP000939">
    <property type="protein sequence ID" value="ACA43426.1"/>
    <property type="molecule type" value="Genomic_DNA"/>
</dbReference>
<dbReference type="RefSeq" id="WP_003401728.1">
    <property type="nucleotide sequence ID" value="NC_010516.1"/>
</dbReference>
<dbReference type="SMR" id="B1IGD8"/>
<dbReference type="KEGG" id="cbb:CLD_1040"/>
<dbReference type="HOGENOM" id="CLU_098841_0_1_9"/>
<dbReference type="Proteomes" id="UP000008541">
    <property type="component" value="Chromosome"/>
</dbReference>
<dbReference type="GO" id="GO:0022625">
    <property type="term" value="C:cytosolic large ribosomal subunit"/>
    <property type="evidence" value="ECO:0007669"/>
    <property type="project" value="TreeGrafter"/>
</dbReference>
<dbReference type="GO" id="GO:0008097">
    <property type="term" value="F:5S rRNA binding"/>
    <property type="evidence" value="ECO:0007669"/>
    <property type="project" value="TreeGrafter"/>
</dbReference>
<dbReference type="GO" id="GO:0003735">
    <property type="term" value="F:structural constituent of ribosome"/>
    <property type="evidence" value="ECO:0007669"/>
    <property type="project" value="InterPro"/>
</dbReference>
<dbReference type="GO" id="GO:0006412">
    <property type="term" value="P:translation"/>
    <property type="evidence" value="ECO:0007669"/>
    <property type="project" value="UniProtKB-UniRule"/>
</dbReference>
<dbReference type="CDD" id="cd00432">
    <property type="entry name" value="Ribosomal_L18_L5e"/>
    <property type="match status" value="1"/>
</dbReference>
<dbReference type="FunFam" id="3.30.420.100:FF:000001">
    <property type="entry name" value="50S ribosomal protein L18"/>
    <property type="match status" value="1"/>
</dbReference>
<dbReference type="Gene3D" id="3.30.420.100">
    <property type="match status" value="1"/>
</dbReference>
<dbReference type="HAMAP" id="MF_01337_B">
    <property type="entry name" value="Ribosomal_uL18_B"/>
    <property type="match status" value="1"/>
</dbReference>
<dbReference type="InterPro" id="IPR004389">
    <property type="entry name" value="Ribosomal_uL18_bac-type"/>
</dbReference>
<dbReference type="InterPro" id="IPR005484">
    <property type="entry name" value="Ribosomal_uL18_bac/euk"/>
</dbReference>
<dbReference type="NCBIfam" id="TIGR00060">
    <property type="entry name" value="L18_bact"/>
    <property type="match status" value="1"/>
</dbReference>
<dbReference type="PANTHER" id="PTHR12899">
    <property type="entry name" value="39S RIBOSOMAL PROTEIN L18, MITOCHONDRIAL"/>
    <property type="match status" value="1"/>
</dbReference>
<dbReference type="PANTHER" id="PTHR12899:SF3">
    <property type="entry name" value="LARGE RIBOSOMAL SUBUNIT PROTEIN UL18M"/>
    <property type="match status" value="1"/>
</dbReference>
<dbReference type="Pfam" id="PF00861">
    <property type="entry name" value="Ribosomal_L18p"/>
    <property type="match status" value="1"/>
</dbReference>
<dbReference type="SUPFAM" id="SSF53137">
    <property type="entry name" value="Translational machinery components"/>
    <property type="match status" value="1"/>
</dbReference>
<organism>
    <name type="scientific">Clostridium botulinum (strain Okra / Type B1)</name>
    <dbReference type="NCBI Taxonomy" id="498213"/>
    <lineage>
        <taxon>Bacteria</taxon>
        <taxon>Bacillati</taxon>
        <taxon>Bacillota</taxon>
        <taxon>Clostridia</taxon>
        <taxon>Eubacteriales</taxon>
        <taxon>Clostridiaceae</taxon>
        <taxon>Clostridium</taxon>
    </lineage>
</organism>
<reference key="1">
    <citation type="journal article" date="2007" name="PLoS ONE">
        <title>Analysis of the neurotoxin complex genes in Clostridium botulinum A1-A4 and B1 strains: BoNT/A3, /Ba4 and /B1 clusters are located within plasmids.</title>
        <authorList>
            <person name="Smith T.J."/>
            <person name="Hill K.K."/>
            <person name="Foley B.T."/>
            <person name="Detter J.C."/>
            <person name="Munk A.C."/>
            <person name="Bruce D.C."/>
            <person name="Doggett N.A."/>
            <person name="Smith L.A."/>
            <person name="Marks J.D."/>
            <person name="Xie G."/>
            <person name="Brettin T.S."/>
        </authorList>
    </citation>
    <scope>NUCLEOTIDE SEQUENCE [LARGE SCALE GENOMIC DNA]</scope>
    <source>
        <strain>Okra / Type B1</strain>
    </source>
</reference>
<feature type="chain" id="PRO_1000142644" description="Large ribosomal subunit protein uL18">
    <location>
        <begin position="1"/>
        <end position="119"/>
    </location>
</feature>
<gene>
    <name evidence="1" type="primary">rplR</name>
    <name type="ordered locus">CLD_1040</name>
</gene>
<comment type="function">
    <text evidence="1">This is one of the proteins that bind and probably mediate the attachment of the 5S RNA into the large ribosomal subunit, where it forms part of the central protuberance.</text>
</comment>
<comment type="subunit">
    <text evidence="1">Part of the 50S ribosomal subunit; part of the 5S rRNA/L5/L18/L25 subcomplex. Contacts the 5S and 23S rRNAs.</text>
</comment>
<comment type="similarity">
    <text evidence="1">Belongs to the universal ribosomal protein uL18 family.</text>
</comment>
<accession>B1IGD8</accession>
<sequence length="119" mass="13383">MFKKNDRSQSRERRHMRVRKKIFGTAERPRLSVYRSEKHIYAQLIDDVEGKTLVAASSAEQGFDGVGSNKEGAKLVGKMVAEKALEKGLKKVVFDRGGFIYHGRIKELAEGAREAGLDF</sequence>